<protein>
    <recommendedName>
        <fullName evidence="1">Trehalose-6-phosphate synthase</fullName>
        <shortName evidence="1">TPS</shortName>
        <ecNumber evidence="1">2.4.1.15</ecNumber>
    </recommendedName>
    <alternativeName>
        <fullName evidence="1">Alpha,alpha-trehalose-phosphate synthase [UDP-forming]</fullName>
    </alternativeName>
    <alternativeName>
        <fullName evidence="1">Osmoregulatory trehalose synthesis protein A</fullName>
        <shortName evidence="1">OtsA</shortName>
    </alternativeName>
    <alternativeName>
        <fullName evidence="1">UDP-glucose-glucosephosphate glucosyltransferase</fullName>
    </alternativeName>
</protein>
<reference key="1">
    <citation type="journal article" date="2008" name="J. Bacteriol.">
        <title>The complete genome sequence of Escherichia coli DH10B: insights into the biology of a laboratory workhorse.</title>
        <authorList>
            <person name="Durfee T."/>
            <person name="Nelson R."/>
            <person name="Baldwin S."/>
            <person name="Plunkett G. III"/>
            <person name="Burland V."/>
            <person name="Mau B."/>
            <person name="Petrosino J.F."/>
            <person name="Qin X."/>
            <person name="Muzny D.M."/>
            <person name="Ayele M."/>
            <person name="Gibbs R.A."/>
            <person name="Csorgo B."/>
            <person name="Posfai G."/>
            <person name="Weinstock G.M."/>
            <person name="Blattner F.R."/>
        </authorList>
    </citation>
    <scope>NUCLEOTIDE SEQUENCE [LARGE SCALE GENOMIC DNA]</scope>
    <source>
        <strain>K12 / DH10B</strain>
    </source>
</reference>
<proteinExistence type="inferred from homology"/>
<feature type="chain" id="PRO_0000348894" description="Trehalose-6-phosphate synthase">
    <location>
        <begin position="1"/>
        <end position="474"/>
    </location>
</feature>
<feature type="binding site" evidence="1">
    <location>
        <position position="10"/>
    </location>
    <ligand>
        <name>D-glucose 6-phosphate</name>
        <dbReference type="ChEBI" id="CHEBI:61548"/>
    </ligand>
</feature>
<feature type="binding site" evidence="1">
    <location>
        <begin position="22"/>
        <end position="23"/>
    </location>
    <ligand>
        <name>UDP-alpha-D-glucose</name>
        <dbReference type="ChEBI" id="CHEBI:58885"/>
    </ligand>
</feature>
<feature type="binding site" evidence="1">
    <location>
        <position position="77"/>
    </location>
    <ligand>
        <name>D-glucose 6-phosphate</name>
        <dbReference type="ChEBI" id="CHEBI:61548"/>
    </ligand>
</feature>
<feature type="binding site" evidence="1">
    <location>
        <position position="131"/>
    </location>
    <ligand>
        <name>D-glucose 6-phosphate</name>
        <dbReference type="ChEBI" id="CHEBI:61548"/>
    </ligand>
</feature>
<feature type="binding site" evidence="1">
    <location>
        <position position="263"/>
    </location>
    <ligand>
        <name>UDP-alpha-D-glucose</name>
        <dbReference type="ChEBI" id="CHEBI:58885"/>
    </ligand>
</feature>
<feature type="binding site" evidence="1">
    <location>
        <position position="268"/>
    </location>
    <ligand>
        <name>UDP-alpha-D-glucose</name>
        <dbReference type="ChEBI" id="CHEBI:58885"/>
    </ligand>
</feature>
<feature type="binding site" evidence="1">
    <location>
        <position position="301"/>
    </location>
    <ligand>
        <name>D-glucose 6-phosphate</name>
        <dbReference type="ChEBI" id="CHEBI:61548"/>
    </ligand>
</feature>
<feature type="binding site" evidence="1">
    <location>
        <position position="340"/>
    </location>
    <ligand>
        <name>UDP-alpha-D-glucose</name>
        <dbReference type="ChEBI" id="CHEBI:58885"/>
    </ligand>
</feature>
<feature type="binding site" evidence="1">
    <location>
        <begin position="366"/>
        <end position="370"/>
    </location>
    <ligand>
        <name>UDP-alpha-D-glucose</name>
        <dbReference type="ChEBI" id="CHEBI:58885"/>
    </ligand>
</feature>
<feature type="site" description="Involved in alpha anomer selectivity" evidence="1">
    <location>
        <position position="86"/>
    </location>
</feature>
<feature type="site" description="Involved in alpha anomer selectivity" evidence="1">
    <location>
        <position position="156"/>
    </location>
</feature>
<dbReference type="EC" id="2.4.1.15" evidence="1"/>
<dbReference type="EMBL" id="CP000948">
    <property type="protein sequence ID" value="ACB03090.1"/>
    <property type="molecule type" value="Genomic_DNA"/>
</dbReference>
<dbReference type="RefSeq" id="WP_001295646.1">
    <property type="nucleotide sequence ID" value="NC_010473.1"/>
</dbReference>
<dbReference type="SMR" id="B1X658"/>
<dbReference type="CAZy" id="GT20">
    <property type="family name" value="Glycosyltransferase Family 20"/>
</dbReference>
<dbReference type="GeneID" id="93776199"/>
<dbReference type="KEGG" id="ecd:ECDH10B_2037"/>
<dbReference type="HOGENOM" id="CLU_002351_7_1_6"/>
<dbReference type="UniPathway" id="UPA00299"/>
<dbReference type="GO" id="GO:0003825">
    <property type="term" value="F:alpha,alpha-trehalose-phosphate synthase (UDP-forming) activity"/>
    <property type="evidence" value="ECO:0007669"/>
    <property type="project" value="UniProtKB-EC"/>
</dbReference>
<dbReference type="GO" id="GO:0005992">
    <property type="term" value="P:trehalose biosynthetic process"/>
    <property type="evidence" value="ECO:0007669"/>
    <property type="project" value="UniProtKB-UniPathway"/>
</dbReference>
<dbReference type="CDD" id="cd03788">
    <property type="entry name" value="GT20_TPS"/>
    <property type="match status" value="1"/>
</dbReference>
<dbReference type="FunFam" id="3.40.50.2000:FF:000024">
    <property type="entry name" value="Trehalose-6-phosphate synthase"/>
    <property type="match status" value="1"/>
</dbReference>
<dbReference type="Gene3D" id="3.40.50.2000">
    <property type="entry name" value="Glycogen Phosphorylase B"/>
    <property type="match status" value="2"/>
</dbReference>
<dbReference type="InterPro" id="IPR001830">
    <property type="entry name" value="Glyco_trans_20"/>
</dbReference>
<dbReference type="InterPro" id="IPR012766">
    <property type="entry name" value="Trehalose_OtsA"/>
</dbReference>
<dbReference type="NCBIfam" id="NF007513">
    <property type="entry name" value="PRK10117.1"/>
    <property type="match status" value="1"/>
</dbReference>
<dbReference type="NCBIfam" id="TIGR02400">
    <property type="entry name" value="trehalose_OtsA"/>
    <property type="match status" value="1"/>
</dbReference>
<dbReference type="PANTHER" id="PTHR10788:SF106">
    <property type="entry name" value="BCDNA.GH08860"/>
    <property type="match status" value="1"/>
</dbReference>
<dbReference type="PANTHER" id="PTHR10788">
    <property type="entry name" value="TREHALOSE-6-PHOSPHATE SYNTHASE"/>
    <property type="match status" value="1"/>
</dbReference>
<dbReference type="Pfam" id="PF00982">
    <property type="entry name" value="Glyco_transf_20"/>
    <property type="match status" value="1"/>
</dbReference>
<dbReference type="SUPFAM" id="SSF53756">
    <property type="entry name" value="UDP-Glycosyltransferase/glycogen phosphorylase"/>
    <property type="match status" value="1"/>
</dbReference>
<sequence length="474" mass="53611">MSRLVVVSNRIAPPDEHAASAGGLAVGILGALKAAGGLWFGWSGETGNEDQPLKKVKKGNITWASFNLSEQDLDEYYNQFSNAVLWPAFHYRLDLVQFQRPAWDGYLRVNALLADKLLPLLQDDDIIWIHDYHLLPFAHELRKRGVNNRIGFFLHIPFPTPEIFNALPTYDTLLEQLCDYDLLGFQTENDRLAFLDCLSNLTRVTTRSAKSHTAWGKAFRTEVYPIGIEPKEIAKQAAGPLPPKLAQLKAELKNVQNIFSVERLDYSKGLPERFLAYEALLEKYPQHHGKIRYTQIAPTSRGDVQAYQDIRHQLENEAGRINGKYGQLGWTPLYYLNQHFDRKLLMKIFRYSDVGLVTPLRDGMNLVAKEYVAAQDPANPGVLVLSQFAGAANELTSALIVNPYDRDEVAAALDRALTMSLAERISRHAEMLDVIVKNDINHWQECFISDLKQIVPRSAESQQRDKVATFPKLA</sequence>
<organism>
    <name type="scientific">Escherichia coli (strain K12 / DH10B)</name>
    <dbReference type="NCBI Taxonomy" id="316385"/>
    <lineage>
        <taxon>Bacteria</taxon>
        <taxon>Pseudomonadati</taxon>
        <taxon>Pseudomonadota</taxon>
        <taxon>Gammaproteobacteria</taxon>
        <taxon>Enterobacterales</taxon>
        <taxon>Enterobacteriaceae</taxon>
        <taxon>Escherichia</taxon>
    </lineage>
</organism>
<gene>
    <name evidence="1" type="primary">otsA</name>
    <name type="ordered locus">ECDH10B_2037</name>
</gene>
<comment type="function">
    <text evidence="1">Probably involved in the osmoprotection via the biosynthesis of trehalose. Catalyzes the transfer of glucose from UDP-alpha-D-glucose (UDP-Glc) to D-glucose 6-phosphate (Glc-6-P) to form trehalose-6-phosphate. Acts with retention of the anomeric configuration of the UDP-sugar donor.</text>
</comment>
<comment type="catalytic activity">
    <reaction evidence="1">
        <text>D-glucose 6-phosphate + UDP-alpha-D-glucose = alpha,alpha-trehalose 6-phosphate + UDP + H(+)</text>
        <dbReference type="Rhea" id="RHEA:18889"/>
        <dbReference type="ChEBI" id="CHEBI:15378"/>
        <dbReference type="ChEBI" id="CHEBI:58223"/>
        <dbReference type="ChEBI" id="CHEBI:58429"/>
        <dbReference type="ChEBI" id="CHEBI:58885"/>
        <dbReference type="ChEBI" id="CHEBI:61548"/>
        <dbReference type="EC" id="2.4.1.15"/>
    </reaction>
</comment>
<comment type="pathway">
    <text evidence="1">Glycan biosynthesis; trehalose biosynthesis.</text>
</comment>
<comment type="subunit">
    <text evidence="1">Homotetramer.</text>
</comment>
<comment type="similarity">
    <text evidence="1">Belongs to the glycosyltransferase 20 family.</text>
</comment>
<name>OTSA_ECODH</name>
<accession>B1X658</accession>
<keyword id="KW-0328">Glycosyltransferase</keyword>
<keyword id="KW-0808">Transferase</keyword>
<evidence type="ECO:0000250" key="1">
    <source>
        <dbReference type="UniProtKB" id="P31677"/>
    </source>
</evidence>